<comment type="function">
    <text evidence="2 4 5 6 7">Virulence regulator that has both architectural and regulatory roles. Impacts cell wall functions and pathogenesis through regulation of multiple genes, including the espACD operon, which is a key ESX-1 component. Influences target gene expression positively or negatively, depending on its binding position relative to the genes it controls. Acts by binding directly to the DNA. May play a central role in regulating virulence gene expression.</text>
</comment>
<comment type="subunit">
    <text evidence="3 4">Homodimer. Binds DNA as a dimer of dimers.</text>
</comment>
<comment type="interaction">
    <interactant intactId="EBI-15937970">
        <id>P9WJB7</id>
    </interactant>
    <interactant intactId="EBI-15937970">
        <id>P9WJB7</id>
        <label>espR</label>
    </interactant>
    <organismsDiffer>false</organismsDiffer>
    <experiments>3</experiments>
</comment>
<comment type="subcellular location">
    <subcellularLocation>
        <location evidence="6">Cytoplasm</location>
        <location evidence="6">Nucleoid</location>
    </subcellularLocation>
</comment>
<comment type="induction">
    <text evidence="2 6 9">Negatively autoregulated (PubMed:22479184). Transcriptionally regulated by the MprB/MprA and PhoP/PhoR two-component systems (PubMed:25536998). Expression is growth phase-dependent, peaking in the stationary phase (PubMed:22479184). Probably induced upon phagocytosis (PubMed:18685700).</text>
</comment>
<comment type="domain">
    <text evidence="2 3 4">The N-terminal domain binds DNA and the C-terminal domain is involved in dimerization. Both domains are required for transcriptional activity and for ESX-1 function.</text>
</comment>
<comment type="disruption phenotype">
    <text evidence="2">Mutants exhibit growth defect during infection of mice. They establish a stable infection by three weeks, but the bacterial burden is an order of magnitude less than the wild-type.</text>
</comment>
<comment type="caution">
    <text evidence="11 12">Was originally thought to be secreted via the ESX-1 secretion system, but it was probably released in the medium via cell lysis.</text>
</comment>
<organism>
    <name type="scientific">Mycobacterium tuberculosis (strain ATCC 25618 / H37Rv)</name>
    <dbReference type="NCBI Taxonomy" id="83332"/>
    <lineage>
        <taxon>Bacteria</taxon>
        <taxon>Bacillati</taxon>
        <taxon>Actinomycetota</taxon>
        <taxon>Actinomycetes</taxon>
        <taxon>Mycobacteriales</taxon>
        <taxon>Mycobacteriaceae</taxon>
        <taxon>Mycobacterium</taxon>
        <taxon>Mycobacterium tuberculosis complex</taxon>
    </lineage>
</organism>
<dbReference type="EMBL" id="AL123456">
    <property type="protein sequence ID" value="CCP46678.1"/>
    <property type="molecule type" value="Genomic_DNA"/>
</dbReference>
<dbReference type="PIR" id="F70654">
    <property type="entry name" value="F70654"/>
</dbReference>
<dbReference type="RefSeq" id="NP_218366.1">
    <property type="nucleotide sequence ID" value="NC_000962.3"/>
</dbReference>
<dbReference type="RefSeq" id="WP_003399759.1">
    <property type="nucleotide sequence ID" value="NZ_NVQJ01000057.1"/>
</dbReference>
<dbReference type="PDB" id="3QF3">
    <property type="method" value="X-ray"/>
    <property type="resolution" value="2.41 A"/>
    <property type="chains" value="A/B/C/D/E/F=2-132"/>
</dbReference>
<dbReference type="PDB" id="3QWG">
    <property type="method" value="X-ray"/>
    <property type="resolution" value="1.99 A"/>
    <property type="chains" value="A/B=2-122"/>
</dbReference>
<dbReference type="PDB" id="3QYX">
    <property type="method" value="X-ray"/>
    <property type="resolution" value="3.75 A"/>
    <property type="chains" value="A/B/C/D=2-132"/>
</dbReference>
<dbReference type="PDB" id="3R1F">
    <property type="method" value="X-ray"/>
    <property type="resolution" value="2.50 A"/>
    <property type="chains" value="A/B/C/D/E/F/G/H/I/J/K/L/M/N/O/P/Q/R=1-132"/>
</dbReference>
<dbReference type="PDB" id="4NDW">
    <property type="method" value="X-ray"/>
    <property type="resolution" value="3.30 A"/>
    <property type="chains" value="A/B=1-132"/>
</dbReference>
<dbReference type="PDBsum" id="3QF3"/>
<dbReference type="PDBsum" id="3QWG"/>
<dbReference type="PDBsum" id="3QYX"/>
<dbReference type="PDBsum" id="3R1F"/>
<dbReference type="PDBsum" id="4NDW"/>
<dbReference type="SMR" id="P9WJB7"/>
<dbReference type="STRING" id="83332.Rv3849"/>
<dbReference type="PaxDb" id="83332-Rv3849"/>
<dbReference type="GeneID" id="45427853"/>
<dbReference type="GeneID" id="886184"/>
<dbReference type="KEGG" id="mtu:Rv3849"/>
<dbReference type="KEGG" id="mtv:RVBD_3849"/>
<dbReference type="TubercuList" id="Rv3849"/>
<dbReference type="eggNOG" id="COG1476">
    <property type="taxonomic scope" value="Bacteria"/>
</dbReference>
<dbReference type="InParanoid" id="P9WJB7"/>
<dbReference type="OrthoDB" id="2679623at2"/>
<dbReference type="EvolutionaryTrace" id="P9WJB7"/>
<dbReference type="Proteomes" id="UP000001584">
    <property type="component" value="Chromosome"/>
</dbReference>
<dbReference type="CollecTF" id="EXPREG_00000c30"/>
<dbReference type="GO" id="GO:0005829">
    <property type="term" value="C:cytosol"/>
    <property type="evidence" value="ECO:0000314"/>
    <property type="project" value="MTBBASE"/>
</dbReference>
<dbReference type="GO" id="GO:0005576">
    <property type="term" value="C:extracellular region"/>
    <property type="evidence" value="ECO:0000314"/>
    <property type="project" value="MTBBASE"/>
</dbReference>
<dbReference type="GO" id="GO:0009295">
    <property type="term" value="C:nucleoid"/>
    <property type="evidence" value="ECO:0007669"/>
    <property type="project" value="UniProtKB-SubCell"/>
</dbReference>
<dbReference type="GO" id="GO:0009274">
    <property type="term" value="C:peptidoglycan-based cell wall"/>
    <property type="evidence" value="ECO:0007005"/>
    <property type="project" value="MTBBASE"/>
</dbReference>
<dbReference type="GO" id="GO:0005886">
    <property type="term" value="C:plasma membrane"/>
    <property type="evidence" value="ECO:0007005"/>
    <property type="project" value="MTBBASE"/>
</dbReference>
<dbReference type="GO" id="GO:0003677">
    <property type="term" value="F:DNA binding"/>
    <property type="evidence" value="ECO:0000314"/>
    <property type="project" value="MTBBASE"/>
</dbReference>
<dbReference type="GO" id="GO:0042802">
    <property type="term" value="F:identical protein binding"/>
    <property type="evidence" value="ECO:0000353"/>
    <property type="project" value="IntAct"/>
</dbReference>
<dbReference type="GO" id="GO:0045893">
    <property type="term" value="P:positive regulation of DNA-templated transcription"/>
    <property type="evidence" value="ECO:0000314"/>
    <property type="project" value="MTBBASE"/>
</dbReference>
<dbReference type="GO" id="GO:0050708">
    <property type="term" value="P:regulation of protein secretion"/>
    <property type="evidence" value="ECO:0000314"/>
    <property type="project" value="MTBBASE"/>
</dbReference>
<dbReference type="GO" id="GO:0052572">
    <property type="term" value="P:response to host immune response"/>
    <property type="evidence" value="ECO:0000270"/>
    <property type="project" value="MTBBASE"/>
</dbReference>
<dbReference type="FunFam" id="1.10.260.40:FF:000028">
    <property type="entry name" value="Secretion protein EspR"/>
    <property type="match status" value="1"/>
</dbReference>
<dbReference type="Gene3D" id="6.10.250.2310">
    <property type="match status" value="1"/>
</dbReference>
<dbReference type="Gene3D" id="1.10.260.40">
    <property type="entry name" value="lambda repressor-like DNA-binding domains"/>
    <property type="match status" value="1"/>
</dbReference>
<dbReference type="InterPro" id="IPR001387">
    <property type="entry name" value="Cro/C1-type_HTH"/>
</dbReference>
<dbReference type="InterPro" id="IPR010982">
    <property type="entry name" value="Lambda_DNA-bd_dom_sf"/>
</dbReference>
<protein>
    <recommendedName>
        <fullName evidence="10">Nucleoid-associated protein EspR</fullName>
    </recommendedName>
    <alternativeName>
        <fullName evidence="10">ESX-1 transcriptional regulatory protein EspR</fullName>
    </alternativeName>
</protein>
<keyword id="KW-0002">3D-structure</keyword>
<keyword id="KW-0010">Activator</keyword>
<keyword id="KW-0963">Cytoplasm</keyword>
<keyword id="KW-0238">DNA-binding</keyword>
<keyword id="KW-1185">Reference proteome</keyword>
<keyword id="KW-0678">Repressor</keyword>
<keyword id="KW-0804">Transcription</keyword>
<keyword id="KW-0805">Transcription regulation</keyword>
<keyword id="KW-0843">Virulence</keyword>
<reference key="1">
    <citation type="journal article" date="1998" name="Nature">
        <title>Deciphering the biology of Mycobacterium tuberculosis from the complete genome sequence.</title>
        <authorList>
            <person name="Cole S.T."/>
            <person name="Brosch R."/>
            <person name="Parkhill J."/>
            <person name="Garnier T."/>
            <person name="Churcher C.M."/>
            <person name="Harris D.E."/>
            <person name="Gordon S.V."/>
            <person name="Eiglmeier K."/>
            <person name="Gas S."/>
            <person name="Barry C.E. III"/>
            <person name="Tekaia F."/>
            <person name="Badcock K."/>
            <person name="Basham D."/>
            <person name="Brown D."/>
            <person name="Chillingworth T."/>
            <person name="Connor R."/>
            <person name="Davies R.M."/>
            <person name="Devlin K."/>
            <person name="Feltwell T."/>
            <person name="Gentles S."/>
            <person name="Hamlin N."/>
            <person name="Holroyd S."/>
            <person name="Hornsby T."/>
            <person name="Jagels K."/>
            <person name="Krogh A."/>
            <person name="McLean J."/>
            <person name="Moule S."/>
            <person name="Murphy L.D."/>
            <person name="Oliver S."/>
            <person name="Osborne J."/>
            <person name="Quail M.A."/>
            <person name="Rajandream M.A."/>
            <person name="Rogers J."/>
            <person name="Rutter S."/>
            <person name="Seeger K."/>
            <person name="Skelton S."/>
            <person name="Squares S."/>
            <person name="Squares R."/>
            <person name="Sulston J.E."/>
            <person name="Taylor K."/>
            <person name="Whitehead S."/>
            <person name="Barrell B.G."/>
        </authorList>
    </citation>
    <scope>NUCLEOTIDE SEQUENCE [LARGE SCALE GENOMIC DNA]</scope>
    <source>
        <strain>ATCC 25618 / H37Rv</strain>
    </source>
</reference>
<reference key="2">
    <citation type="journal article" date="2008" name="BMC Syst. Biol.">
        <title>targetTB: a target identification pipeline for Mycobacterium tuberculosis through an interactome, reactome and genome-scale structural analysis.</title>
        <authorList>
            <person name="Raman K."/>
            <person name="Yeturu K."/>
            <person name="Chandra N."/>
        </authorList>
    </citation>
    <scope>IDENTIFICATION AS A DRUG TARGET [LARGE SCALE ANALYSIS]</scope>
</reference>
<reference key="3">
    <citation type="journal article" date="2008" name="Nature">
        <title>Secreted transcription factor controls Mycobacterium tuberculosis virulence.</title>
        <authorList>
            <person name="Raghavan S."/>
            <person name="Manzanillo P."/>
            <person name="Chan K."/>
            <person name="Dovey C."/>
            <person name="Cox J.S."/>
        </authorList>
    </citation>
    <scope>FUNCTION AS AN ACTIVATOR</scope>
    <scope>INDUCTION</scope>
    <scope>DOMAIN</scope>
    <scope>DISRUPTION PHENOTYPE</scope>
</reference>
<reference key="4">
    <citation type="journal article" date="2011" name="Mol. Cell. Proteomics">
        <title>Proteogenomic analysis of Mycobacterium tuberculosis by high resolution mass spectrometry.</title>
        <authorList>
            <person name="Kelkar D.S."/>
            <person name="Kumar D."/>
            <person name="Kumar P."/>
            <person name="Balakrishnan L."/>
            <person name="Muthusamy B."/>
            <person name="Yadav A.K."/>
            <person name="Shrivastava P."/>
            <person name="Marimuthu A."/>
            <person name="Anand S."/>
            <person name="Sundaram H."/>
            <person name="Kingsbury R."/>
            <person name="Harsha H.C."/>
            <person name="Nair B."/>
            <person name="Prasad T.S."/>
            <person name="Chauhan D.S."/>
            <person name="Katoch K."/>
            <person name="Katoch V.M."/>
            <person name="Kumar P."/>
            <person name="Chaerkady R."/>
            <person name="Ramachandran S."/>
            <person name="Dash D."/>
            <person name="Pandey A."/>
        </authorList>
    </citation>
    <scope>IDENTIFICATION BY MASS SPECTROMETRY [LARGE SCALE ANALYSIS]</scope>
    <source>
        <strain>ATCC 25618 / H37Rv</strain>
    </source>
</reference>
<reference key="5">
    <citation type="journal article" date="2012" name="J. Bacteriol.">
        <title>Long-range transcriptional control of an operon necessary for virulence-critical ESX-1 secretion in Mycobacterium tuberculosis.</title>
        <authorList>
            <person name="Hunt D.M."/>
            <person name="Sweeney N.P."/>
            <person name="Mori L."/>
            <person name="Whalan R.H."/>
            <person name="Comas I."/>
            <person name="Norman L."/>
            <person name="Cortes T."/>
            <person name="Arnvig K.B."/>
            <person name="Davis E.O."/>
            <person name="Stapleton M.R."/>
            <person name="Green J."/>
            <person name="Buxton R.S."/>
        </authorList>
    </citation>
    <scope>FUNCTION IN REGULATION OF THE ESPACD OPERON</scope>
    <source>
        <strain>ATCC 25618 / H37Rv</strain>
    </source>
</reference>
<reference key="6">
    <citation type="journal article" date="2012" name="PLoS Pathog.">
        <title>Virulence regulator EspR of Mycobacterium tuberculosis is a nucleoid-associated protein.</title>
        <authorList>
            <person name="Blasco B."/>
            <person name="Chen J.M."/>
            <person name="Hartkoorn R."/>
            <person name="Sala C."/>
            <person name="Uplekar S."/>
            <person name="Rougemont J."/>
            <person name="Pojer F."/>
            <person name="Cole S.T."/>
        </authorList>
    </citation>
    <scope>FUNCTION</scope>
    <scope>DNA-BINDING</scope>
    <scope>SUBCELLULAR LOCATION</scope>
    <scope>INDUCTION</scope>
    <source>
        <strain>ATCC 25618 / H37Rv</strain>
    </source>
</reference>
<reference key="7">
    <citation type="journal article" date="2013" name="Curr. Microbiol.">
        <title>Functional analysis of the EspR binding sites upstream of espR in Mycobacterium tuberculosis.</title>
        <authorList>
            <person name="Cao G."/>
            <person name="Howard S.T."/>
            <person name="Zhang P."/>
            <person name="Hou G."/>
            <person name="Pang X."/>
        </authorList>
    </citation>
    <scope>FUNCTION</scope>
    <scope>DNA-BINDING</scope>
    <source>
        <strain>ATCC 35801 / TMC 107 / Erdman</strain>
    </source>
</reference>
<reference key="8">
    <citation type="journal article" date="2014" name="J. Bacteriol.">
        <title>Functional dissection of intersubunit interactions in the EspR virulence regulator of Mycobacterium tuberculosis.</title>
        <authorList>
            <person name="Blasco B."/>
            <person name="Japaridze A."/>
            <person name="Stenta M."/>
            <person name="Wicky B.I."/>
            <person name="Dietler G."/>
            <person name="Dal Peraro M."/>
            <person name="Pojer F."/>
            <person name="Cole S.T."/>
        </authorList>
    </citation>
    <scope>MUTAGENESIS OF ARG-69; LYS-71; ARG-100; ARG-105; ASP-122; ARG-125 AND ASP-131</scope>
    <source>
        <strain>H37Rv</strain>
    </source>
</reference>
<reference key="9">
    <citation type="journal article" date="2015" name="Microbiology">
        <title>EspR, a regulator of the ESX-1 secretion system in Mycobacterium tuberculosis, is directly regulated by the two-component systems MprAB and PhoPR.</title>
        <authorList>
            <person name="Cao G."/>
            <person name="Howard S.T."/>
            <person name="Zhang P."/>
            <person name="Wang X."/>
            <person name="Chen X.L."/>
            <person name="Samten B."/>
            <person name="Pang X."/>
        </authorList>
    </citation>
    <scope>INDUCTION</scope>
    <source>
        <strain>ATCC 35801 / TMC 107 / Erdman</strain>
    </source>
</reference>
<reference key="10">
    <citation type="journal article" date="2011" name="Acta Crystallogr. F">
        <title>Cloning, purification, crystallization and preliminary X-ray analysis of ESX-1-secreted protein regulator (EspR) from Mycobacterium tuberculosis.</title>
        <authorList>
            <person name="Gangwar S.P."/>
            <person name="Meena S.R."/>
            <person name="Saxena A.K."/>
        </authorList>
    </citation>
    <scope>CRYSTALLIZATION</scope>
    <source>
        <strain>ATCC 25618 / H37Rv</strain>
    </source>
</reference>
<reference evidence="13 14 15" key="11">
    <citation type="journal article" date="2011" name="Mol. Microbiol.">
        <title>Atypical DNA recognition mechanism used by the EspR virulence regulator of Mycobacterium tuberculosis.</title>
        <authorList>
            <person name="Blasco B."/>
            <person name="Stenta M."/>
            <person name="Alonso-Sarduy L."/>
            <person name="Dietler G."/>
            <person name="Peraro M.D."/>
            <person name="Cole S.T."/>
            <person name="Pojer F."/>
        </authorList>
    </citation>
    <scope>X-RAY CRYSTALLOGRAPHY (2.41 ANGSTROMS) OF 2-122</scope>
    <scope>FUNCTION</scope>
    <scope>DNA-BINDING</scope>
    <scope>SUBUNIT</scope>
    <scope>DOMAIN</scope>
    <source>
        <strain>ATCC 25618 / H37Rv</strain>
    </source>
</reference>
<reference evidence="16" key="12">
    <citation type="journal article" date="2011" name="Proc. Natl. Acad. Sci. U.S.A.">
        <title>EspR, a key regulator of Mycobacterium tuberculosis virulence, adopts a unique dimeric structure among helix-turn-helix proteins.</title>
        <authorList>
            <person name="Rosenberg O.S."/>
            <person name="Dovey C."/>
            <person name="Tempesta M."/>
            <person name="Robbins R.A."/>
            <person name="Finer-Moore J.S."/>
            <person name="Stroud R.M."/>
            <person name="Cox J.S."/>
        </authorList>
    </citation>
    <scope>X-RAY CRYSTALLOGRAPHY (2.5 ANGSTROMS)</scope>
    <scope>SUBUNIT</scope>
    <scope>DOMAIN</scope>
    <scope>DNA-BINDING</scope>
</reference>
<reference evidence="17" key="13">
    <citation type="journal article" date="2014" name="Acta Crystallogr. F Struct. Biol. Commun.">
        <title>Comparison of four different crystal forms of the Mycobacterium tuberculosis ESX-1 secreted protein regulator EspR.</title>
        <authorList>
            <person name="Gangwar S.P."/>
            <person name="Meena S.R."/>
            <person name="Saxena A.K."/>
        </authorList>
    </citation>
    <scope>X-RAY CRYSTALLOGRAPHY (3.30 ANGSTROMS)</scope>
</reference>
<accession>P9WJB7</accession>
<accession>L0TDR1</accession>
<accession>P96228</accession>
<accession>Q8VIS2</accession>
<evidence type="ECO:0000255" key="1"/>
<evidence type="ECO:0000269" key="2">
    <source>
    </source>
</evidence>
<evidence type="ECO:0000269" key="3">
    <source>
    </source>
</evidence>
<evidence type="ECO:0000269" key="4">
    <source>
    </source>
</evidence>
<evidence type="ECO:0000269" key="5">
    <source>
    </source>
</evidence>
<evidence type="ECO:0000269" key="6">
    <source>
    </source>
</evidence>
<evidence type="ECO:0000269" key="7">
    <source>
    </source>
</evidence>
<evidence type="ECO:0000269" key="8">
    <source>
    </source>
</evidence>
<evidence type="ECO:0000269" key="9">
    <source>
    </source>
</evidence>
<evidence type="ECO:0000305" key="10"/>
<evidence type="ECO:0000305" key="11">
    <source>
    </source>
</evidence>
<evidence type="ECO:0000305" key="12">
    <source>
    </source>
</evidence>
<evidence type="ECO:0007744" key="13">
    <source>
        <dbReference type="PDB" id="3QF3"/>
    </source>
</evidence>
<evidence type="ECO:0007744" key="14">
    <source>
        <dbReference type="PDB" id="3QWG"/>
    </source>
</evidence>
<evidence type="ECO:0007744" key="15">
    <source>
        <dbReference type="PDB" id="3QYX"/>
    </source>
</evidence>
<evidence type="ECO:0007744" key="16">
    <source>
        <dbReference type="PDB" id="3R1F"/>
    </source>
</evidence>
<evidence type="ECO:0007744" key="17">
    <source>
        <dbReference type="PDB" id="4NDW"/>
    </source>
</evidence>
<evidence type="ECO:0007829" key="18">
    <source>
        <dbReference type="PDB" id="3QF3"/>
    </source>
</evidence>
<evidence type="ECO:0007829" key="19">
    <source>
        <dbReference type="PDB" id="3QWG"/>
    </source>
</evidence>
<gene>
    <name type="primary">espR</name>
    <name type="ordered locus">Rv3849</name>
</gene>
<feature type="chain" id="PRO_0000393905" description="Nucleoid-associated protein EspR">
    <location>
        <begin position="1"/>
        <end position="132"/>
    </location>
</feature>
<feature type="DNA-binding region" description="H-T-H motif" evidence="1">
    <location>
        <begin position="38"/>
        <end position="50"/>
    </location>
</feature>
<feature type="mutagenesis site" description="Affects protein stability. Decreases affinity for DNA and dimerization capacity." evidence="8">
    <original>R</original>
    <variation>A</variation>
    <location>
        <position position="69"/>
    </location>
</feature>
<feature type="mutagenesis site" description="Decreases affinity for DNA. Does not affect dimerization." evidence="8">
    <original>K</original>
    <variation>A</variation>
    <location>
        <position position="71"/>
    </location>
</feature>
<feature type="mutagenesis site" description="Affects protein stability. Decreases affinity for DNA. Does not affect dimerization." evidence="8">
    <original>R</original>
    <variation>A</variation>
    <location>
        <position position="100"/>
    </location>
</feature>
<feature type="mutagenesis site" description="Does not affect DNA binding." evidence="8">
    <original>R</original>
    <variation>A</variation>
    <location>
        <position position="105"/>
    </location>
</feature>
<feature type="mutagenesis site" description="Moderate impact on protein stability. Does not affect DNA binding." evidence="8">
    <original>D</original>
    <variation>A</variation>
    <location>
        <position position="122"/>
    </location>
</feature>
<feature type="mutagenesis site" description="Moderate impact on protein stability. Does not affect DNA binding." evidence="8">
    <original>R</original>
    <variation>A</variation>
    <location>
        <position position="125"/>
    </location>
</feature>
<feature type="mutagenesis site" description="Moderate impact on protein stability. Does not affect DNA binding." evidence="8">
    <original>D</original>
    <variation>A</variation>
    <location>
        <position position="131"/>
    </location>
</feature>
<feature type="helix" evidence="19">
    <location>
        <begin position="5"/>
        <end position="15"/>
    </location>
</feature>
<feature type="turn" evidence="19">
    <location>
        <begin position="19"/>
        <end position="21"/>
    </location>
</feature>
<feature type="helix" evidence="19">
    <location>
        <begin position="26"/>
        <end position="35"/>
    </location>
</feature>
<feature type="helix" evidence="19">
    <location>
        <begin position="42"/>
        <end position="49"/>
    </location>
</feature>
<feature type="strand" evidence="18">
    <location>
        <begin position="51"/>
        <end position="53"/>
    </location>
</feature>
<feature type="helix" evidence="19">
    <location>
        <begin position="58"/>
        <end position="67"/>
    </location>
</feature>
<feature type="helix" evidence="19">
    <location>
        <begin position="73"/>
        <end position="76"/>
    </location>
</feature>
<feature type="helix" evidence="19">
    <location>
        <begin position="78"/>
        <end position="94"/>
    </location>
</feature>
<feature type="helix" evidence="18">
    <location>
        <begin position="97"/>
        <end position="106"/>
    </location>
</feature>
<feature type="helix" evidence="18">
    <location>
        <begin position="111"/>
        <end position="127"/>
    </location>
</feature>
<proteinExistence type="evidence at protein level"/>
<sequence length="132" mass="14709">MSTTFAARLNRLFDTVYPPGRGPHTSAEVIAALKAEGITMSAPYLSQLRSGNRTNPSGATMAALANFFRIKAAYFTDDEYYEKLDKELQWLCTMRDDGVRRIAQRAHGLPSAAQQKVLDRIDELRRAEGIDA</sequence>
<name>ESPR_MYCTU</name>